<proteinExistence type="inferred from homology"/>
<feature type="chain" id="PRO_1000140294" description="HTH-type transcriptional repressor PurR">
    <location>
        <begin position="1"/>
        <end position="341"/>
    </location>
</feature>
<feature type="domain" description="HTH lacI-type" evidence="1">
    <location>
        <begin position="2"/>
        <end position="56"/>
    </location>
</feature>
<feature type="DNA-binding region" description="H-T-H motif" evidence="1">
    <location>
        <begin position="4"/>
        <end position="23"/>
    </location>
</feature>
<feature type="DNA-binding region" evidence="1">
    <location>
        <begin position="48"/>
        <end position="56"/>
    </location>
</feature>
<feature type="binding site" evidence="1">
    <location>
        <position position="73"/>
    </location>
    <ligand>
        <name>hypoxanthine</name>
        <dbReference type="ChEBI" id="CHEBI:17368"/>
    </ligand>
</feature>
<feature type="binding site" evidence="1">
    <location>
        <position position="190"/>
    </location>
    <ligand>
        <name>hypoxanthine</name>
        <dbReference type="ChEBI" id="CHEBI:17368"/>
    </ligand>
</feature>
<feature type="binding site" evidence="1">
    <location>
        <position position="192"/>
    </location>
    <ligand>
        <name>hypoxanthine</name>
        <dbReference type="ChEBI" id="CHEBI:17368"/>
    </ligand>
</feature>
<feature type="binding site" evidence="1">
    <location>
        <position position="221"/>
    </location>
    <ligand>
        <name>hypoxanthine</name>
        <dbReference type="ChEBI" id="CHEBI:17368"/>
    </ligand>
</feature>
<feature type="binding site" evidence="1">
    <location>
        <position position="275"/>
    </location>
    <ligand>
        <name>hypoxanthine</name>
        <dbReference type="ChEBI" id="CHEBI:17368"/>
    </ligand>
</feature>
<evidence type="ECO:0000255" key="1">
    <source>
        <dbReference type="HAMAP-Rule" id="MF_01277"/>
    </source>
</evidence>
<reference key="1">
    <citation type="journal article" date="2009" name="PLoS Genet.">
        <title>Organised genome dynamics in the Escherichia coli species results in highly diverse adaptive paths.</title>
        <authorList>
            <person name="Touchon M."/>
            <person name="Hoede C."/>
            <person name="Tenaillon O."/>
            <person name="Barbe V."/>
            <person name="Baeriswyl S."/>
            <person name="Bidet P."/>
            <person name="Bingen E."/>
            <person name="Bonacorsi S."/>
            <person name="Bouchier C."/>
            <person name="Bouvet O."/>
            <person name="Calteau A."/>
            <person name="Chiapello H."/>
            <person name="Clermont O."/>
            <person name="Cruveiller S."/>
            <person name="Danchin A."/>
            <person name="Diard M."/>
            <person name="Dossat C."/>
            <person name="Karoui M.E."/>
            <person name="Frapy E."/>
            <person name="Garry L."/>
            <person name="Ghigo J.M."/>
            <person name="Gilles A.M."/>
            <person name="Johnson J."/>
            <person name="Le Bouguenec C."/>
            <person name="Lescat M."/>
            <person name="Mangenot S."/>
            <person name="Martinez-Jehanne V."/>
            <person name="Matic I."/>
            <person name="Nassif X."/>
            <person name="Oztas S."/>
            <person name="Petit M.A."/>
            <person name="Pichon C."/>
            <person name="Rouy Z."/>
            <person name="Ruf C.S."/>
            <person name="Schneider D."/>
            <person name="Tourret J."/>
            <person name="Vacherie B."/>
            <person name="Vallenet D."/>
            <person name="Medigue C."/>
            <person name="Rocha E.P.C."/>
            <person name="Denamur E."/>
        </authorList>
    </citation>
    <scope>NUCLEOTIDE SEQUENCE [LARGE SCALE GENOMIC DNA]</scope>
    <source>
        <strain>ATCC 35469 / DSM 13698 / BCRC 15582 / CCUG 18766 / IAM 14443 / JCM 21226 / LMG 7866 / NBRC 102419 / NCTC 12128 / CDC 0568-73</strain>
    </source>
</reference>
<dbReference type="EMBL" id="CU928158">
    <property type="protein sequence ID" value="CAQ88906.1"/>
    <property type="molecule type" value="Genomic_DNA"/>
</dbReference>
<dbReference type="RefSeq" id="WP_000190995.1">
    <property type="nucleotide sequence ID" value="NC_011740.1"/>
</dbReference>
<dbReference type="SMR" id="B7LQA9"/>
<dbReference type="GeneID" id="75057570"/>
<dbReference type="KEGG" id="efe:EFER_1386"/>
<dbReference type="HOGENOM" id="CLU_037628_6_2_6"/>
<dbReference type="OrthoDB" id="9798934at2"/>
<dbReference type="UniPathway" id="UPA00488"/>
<dbReference type="Proteomes" id="UP000000745">
    <property type="component" value="Chromosome"/>
</dbReference>
<dbReference type="GO" id="GO:0003700">
    <property type="term" value="F:DNA-binding transcription factor activity"/>
    <property type="evidence" value="ECO:0007669"/>
    <property type="project" value="TreeGrafter"/>
</dbReference>
<dbReference type="GO" id="GO:0000976">
    <property type="term" value="F:transcription cis-regulatory region binding"/>
    <property type="evidence" value="ECO:0007669"/>
    <property type="project" value="TreeGrafter"/>
</dbReference>
<dbReference type="GO" id="GO:0045892">
    <property type="term" value="P:negative regulation of DNA-templated transcription"/>
    <property type="evidence" value="ECO:0007669"/>
    <property type="project" value="UniProtKB-UniRule"/>
</dbReference>
<dbReference type="GO" id="GO:0006164">
    <property type="term" value="P:purine nucleotide biosynthetic process"/>
    <property type="evidence" value="ECO:0007669"/>
    <property type="project" value="UniProtKB-UniPathway"/>
</dbReference>
<dbReference type="CDD" id="cd01392">
    <property type="entry name" value="HTH_LacI"/>
    <property type="match status" value="1"/>
</dbReference>
<dbReference type="CDD" id="cd06275">
    <property type="entry name" value="PBP1_PurR"/>
    <property type="match status" value="1"/>
</dbReference>
<dbReference type="FunFam" id="1.10.260.40:FF:000002">
    <property type="entry name" value="HTH-type transcriptional repressor PurR"/>
    <property type="match status" value="1"/>
</dbReference>
<dbReference type="FunFam" id="3.40.50.2300:FF:000045">
    <property type="entry name" value="HTH-type transcriptional repressor PurR"/>
    <property type="match status" value="1"/>
</dbReference>
<dbReference type="Gene3D" id="3.40.50.2300">
    <property type="match status" value="2"/>
</dbReference>
<dbReference type="Gene3D" id="1.10.260.40">
    <property type="entry name" value="lambda repressor-like DNA-binding domains"/>
    <property type="match status" value="1"/>
</dbReference>
<dbReference type="HAMAP" id="MF_01277">
    <property type="entry name" value="HTH_type_PurR"/>
    <property type="match status" value="1"/>
</dbReference>
<dbReference type="InterPro" id="IPR000843">
    <property type="entry name" value="HTH_LacI"/>
</dbReference>
<dbReference type="InterPro" id="IPR046335">
    <property type="entry name" value="LacI/GalR-like_sensor"/>
</dbReference>
<dbReference type="InterPro" id="IPR010982">
    <property type="entry name" value="Lambda_DNA-bd_dom_sf"/>
</dbReference>
<dbReference type="InterPro" id="IPR028082">
    <property type="entry name" value="Peripla_BP_I"/>
</dbReference>
<dbReference type="InterPro" id="IPR023588">
    <property type="entry name" value="Tscrpt_reg_HTH_PurR"/>
</dbReference>
<dbReference type="NCBIfam" id="NF007979">
    <property type="entry name" value="PRK10703.1"/>
    <property type="match status" value="1"/>
</dbReference>
<dbReference type="PANTHER" id="PTHR30146:SF148">
    <property type="entry name" value="HTH-TYPE TRANSCRIPTIONAL REPRESSOR PURR-RELATED"/>
    <property type="match status" value="1"/>
</dbReference>
<dbReference type="PANTHER" id="PTHR30146">
    <property type="entry name" value="LACI-RELATED TRANSCRIPTIONAL REPRESSOR"/>
    <property type="match status" value="1"/>
</dbReference>
<dbReference type="Pfam" id="PF00356">
    <property type="entry name" value="LacI"/>
    <property type="match status" value="1"/>
</dbReference>
<dbReference type="Pfam" id="PF13377">
    <property type="entry name" value="Peripla_BP_3"/>
    <property type="match status" value="1"/>
</dbReference>
<dbReference type="PRINTS" id="PR00036">
    <property type="entry name" value="HTHLACI"/>
</dbReference>
<dbReference type="SMART" id="SM00354">
    <property type="entry name" value="HTH_LACI"/>
    <property type="match status" value="1"/>
</dbReference>
<dbReference type="SUPFAM" id="SSF47413">
    <property type="entry name" value="lambda repressor-like DNA-binding domains"/>
    <property type="match status" value="1"/>
</dbReference>
<dbReference type="SUPFAM" id="SSF53822">
    <property type="entry name" value="Periplasmic binding protein-like I"/>
    <property type="match status" value="1"/>
</dbReference>
<dbReference type="PROSITE" id="PS00356">
    <property type="entry name" value="HTH_LACI_1"/>
    <property type="match status" value="1"/>
</dbReference>
<dbReference type="PROSITE" id="PS50932">
    <property type="entry name" value="HTH_LACI_2"/>
    <property type="match status" value="1"/>
</dbReference>
<protein>
    <recommendedName>
        <fullName evidence="1">HTH-type transcriptional repressor PurR</fullName>
    </recommendedName>
    <alternativeName>
        <fullName evidence="1">Pur regulon repressor</fullName>
    </alternativeName>
    <alternativeName>
        <fullName evidence="1">Purine nucleotide synthesis repressor</fullName>
    </alternativeName>
</protein>
<keyword id="KW-0238">DNA-binding</keyword>
<keyword id="KW-0658">Purine biosynthesis</keyword>
<keyword id="KW-0678">Repressor</keyword>
<keyword id="KW-0804">Transcription</keyword>
<keyword id="KW-0805">Transcription regulation</keyword>
<comment type="function">
    <text evidence="1">Is the main repressor of the genes involved in the de novo synthesis of purine nucleotides, regulating purB, purC, purEK, purF, purHD, purL, purMN and guaBA expression. PurR is allosterically activated to bind its cognate DNA by binding the purine corepressors, hypoxanthine or guanine, thereby effecting transcription repression.</text>
</comment>
<comment type="pathway">
    <text>Purine metabolism; purine nucleotide biosynthesis [regulation].</text>
</comment>
<comment type="subunit">
    <text evidence="1">Homodimer.</text>
</comment>
<comment type="domain">
    <text evidence="1">Consists of two structural and functional domains: an N-terminal DNA-binding domain, approximately the first 60 residues, and a larger C-terminal domain, approximately 280 residues, which imparts the function of corepressor binding and oligomerization.</text>
</comment>
<organism>
    <name type="scientific">Escherichia fergusonii (strain ATCC 35469 / DSM 13698 / CCUG 18766 / IAM 14443 / JCM 21226 / LMG 7866 / NBRC 102419 / NCTC 12128 / CDC 0568-73)</name>
    <dbReference type="NCBI Taxonomy" id="585054"/>
    <lineage>
        <taxon>Bacteria</taxon>
        <taxon>Pseudomonadati</taxon>
        <taxon>Pseudomonadota</taxon>
        <taxon>Gammaproteobacteria</taxon>
        <taxon>Enterobacterales</taxon>
        <taxon>Enterobacteriaceae</taxon>
        <taxon>Escherichia</taxon>
    </lineage>
</organism>
<gene>
    <name evidence="1" type="primary">purR</name>
    <name type="ordered locus">EFER_1386</name>
</gene>
<name>PURR_ESCF3</name>
<accession>B7LQA9</accession>
<sequence length="341" mass="38188">MATIKDVAKRANVSTTTVSHVINKTRFVAEETRNAVWAAIKELHYSPSAVARSLKVNHTKSIGLLATSSEAAYFAEIIEAVEKNCFQKGYTLILGNAWNNLEKQRAYLSMMAQKRVDGLLVMCSEYPEPLLTMLEEYRHIPMVVMDWGEAKADFTDAVIDNAFEGGYMAGRYLIERGHRDIGVIPGPLERNTGAGRLAGFMKAMEEALIKVPENWIVQGDFEPESGYRAMQQILAQTHRPTAVFCGGDIMAMGALCAADEMGLRVPQDISVIGYDNVRNARYFTPALTTIHQPKDSLGETAFNMLLDRIVNKREEPQSIEVHPRLIERRSVADGPFRDYRR</sequence>